<dbReference type="EMBL" id="CP001399">
    <property type="protein sequence ID" value="ACP35994.1"/>
    <property type="molecule type" value="Genomic_DNA"/>
</dbReference>
<dbReference type="RefSeq" id="WP_012711863.1">
    <property type="nucleotide sequence ID" value="NC_012589.1"/>
</dbReference>
<dbReference type="SMR" id="C3MRI1"/>
<dbReference type="GeneID" id="84062203"/>
<dbReference type="KEGG" id="sis:LS215_1999"/>
<dbReference type="HOGENOM" id="CLU_041732_0_0_2"/>
<dbReference type="OrthoDB" id="31129at2157"/>
<dbReference type="Proteomes" id="UP000001747">
    <property type="component" value="Chromosome"/>
</dbReference>
<dbReference type="GO" id="GO:0005524">
    <property type="term" value="F:ATP binding"/>
    <property type="evidence" value="ECO:0007669"/>
    <property type="project" value="UniProtKB-UniRule"/>
</dbReference>
<dbReference type="GO" id="GO:0016887">
    <property type="term" value="F:ATP hydrolysis activity"/>
    <property type="evidence" value="ECO:0007669"/>
    <property type="project" value="InterPro"/>
</dbReference>
<dbReference type="GO" id="GO:0140664">
    <property type="term" value="F:ATP-dependent DNA damage sensor activity"/>
    <property type="evidence" value="ECO:0007669"/>
    <property type="project" value="InterPro"/>
</dbReference>
<dbReference type="GO" id="GO:0003684">
    <property type="term" value="F:damaged DNA binding"/>
    <property type="evidence" value="ECO:0007669"/>
    <property type="project" value="UniProtKB-UniRule"/>
</dbReference>
<dbReference type="GO" id="GO:0006310">
    <property type="term" value="P:DNA recombination"/>
    <property type="evidence" value="ECO:0007669"/>
    <property type="project" value="UniProtKB-UniRule"/>
</dbReference>
<dbReference type="GO" id="GO:0006281">
    <property type="term" value="P:DNA repair"/>
    <property type="evidence" value="ECO:0007669"/>
    <property type="project" value="UniProtKB-UniRule"/>
</dbReference>
<dbReference type="CDD" id="cd19515">
    <property type="entry name" value="archRadA"/>
    <property type="match status" value="1"/>
</dbReference>
<dbReference type="FunFam" id="3.40.50.300:FF:002052">
    <property type="entry name" value="DNA repair protein RAD51 homolog"/>
    <property type="match status" value="1"/>
</dbReference>
<dbReference type="Gene3D" id="1.10.150.20">
    <property type="entry name" value="5' to 3' exonuclease, C-terminal subdomain"/>
    <property type="match status" value="1"/>
</dbReference>
<dbReference type="Gene3D" id="3.40.50.300">
    <property type="entry name" value="P-loop containing nucleotide triphosphate hydrolases"/>
    <property type="match status" value="1"/>
</dbReference>
<dbReference type="HAMAP" id="MF_00348">
    <property type="entry name" value="RadA_arch"/>
    <property type="match status" value="1"/>
</dbReference>
<dbReference type="InterPro" id="IPR003593">
    <property type="entry name" value="AAA+_ATPase"/>
</dbReference>
<dbReference type="InterPro" id="IPR013632">
    <property type="entry name" value="DNA_recomb/repair_Rad51_C"/>
</dbReference>
<dbReference type="InterPro" id="IPR011938">
    <property type="entry name" value="DNA_recomb/repair_RadA"/>
</dbReference>
<dbReference type="InterPro" id="IPR016467">
    <property type="entry name" value="DNA_recomb/repair_RecA-like"/>
</dbReference>
<dbReference type="InterPro" id="IPR010995">
    <property type="entry name" value="DNA_repair_Rad51/TF_NusA_a-hlx"/>
</dbReference>
<dbReference type="InterPro" id="IPR027417">
    <property type="entry name" value="P-loop_NTPase"/>
</dbReference>
<dbReference type="InterPro" id="IPR020588">
    <property type="entry name" value="RecA_ATP-bd"/>
</dbReference>
<dbReference type="InterPro" id="IPR020587">
    <property type="entry name" value="RecA_monomer-monomer_interface"/>
</dbReference>
<dbReference type="NCBIfam" id="NF003301">
    <property type="entry name" value="PRK04301.1"/>
    <property type="match status" value="1"/>
</dbReference>
<dbReference type="NCBIfam" id="TIGR02236">
    <property type="entry name" value="recomb_radA"/>
    <property type="match status" value="1"/>
</dbReference>
<dbReference type="PANTHER" id="PTHR22942:SF30">
    <property type="entry name" value="MEIOTIC RECOMBINATION PROTEIN DMC1_LIM15 HOMOLOG"/>
    <property type="match status" value="1"/>
</dbReference>
<dbReference type="PANTHER" id="PTHR22942">
    <property type="entry name" value="RECA/RAD51/RADA DNA STRAND-PAIRING FAMILY MEMBER"/>
    <property type="match status" value="1"/>
</dbReference>
<dbReference type="Pfam" id="PF14520">
    <property type="entry name" value="HHH_5"/>
    <property type="match status" value="1"/>
</dbReference>
<dbReference type="Pfam" id="PF08423">
    <property type="entry name" value="Rad51"/>
    <property type="match status" value="1"/>
</dbReference>
<dbReference type="PIRSF" id="PIRSF005856">
    <property type="entry name" value="Rad51"/>
    <property type="match status" value="1"/>
</dbReference>
<dbReference type="SMART" id="SM00382">
    <property type="entry name" value="AAA"/>
    <property type="match status" value="1"/>
</dbReference>
<dbReference type="SUPFAM" id="SSF52540">
    <property type="entry name" value="P-loop containing nucleoside triphosphate hydrolases"/>
    <property type="match status" value="1"/>
</dbReference>
<dbReference type="SUPFAM" id="SSF47794">
    <property type="entry name" value="Rad51 N-terminal domain-like"/>
    <property type="match status" value="1"/>
</dbReference>
<dbReference type="PROSITE" id="PS50162">
    <property type="entry name" value="RECA_2"/>
    <property type="match status" value="1"/>
</dbReference>
<dbReference type="PROSITE" id="PS50163">
    <property type="entry name" value="RECA_3"/>
    <property type="match status" value="1"/>
</dbReference>
<organism>
    <name type="scientific">Saccharolobus islandicus (strain L.S.2.15 / Lassen #1)</name>
    <name type="common">Sulfolobus islandicus</name>
    <dbReference type="NCBI Taxonomy" id="429572"/>
    <lineage>
        <taxon>Archaea</taxon>
        <taxon>Thermoproteota</taxon>
        <taxon>Thermoprotei</taxon>
        <taxon>Sulfolobales</taxon>
        <taxon>Sulfolobaceae</taxon>
        <taxon>Saccharolobus</taxon>
    </lineage>
</organism>
<name>RADA_SACI2</name>
<gene>
    <name evidence="1" type="primary">radA</name>
    <name type="ordered locus">LS215_1999</name>
</gene>
<keyword id="KW-0067">ATP-binding</keyword>
<keyword id="KW-0227">DNA damage</keyword>
<keyword id="KW-0233">DNA recombination</keyword>
<keyword id="KW-0238">DNA-binding</keyword>
<keyword id="KW-0547">Nucleotide-binding</keyword>
<evidence type="ECO:0000255" key="1">
    <source>
        <dbReference type="HAMAP-Rule" id="MF_00348"/>
    </source>
</evidence>
<reference key="1">
    <citation type="journal article" date="2009" name="Proc. Natl. Acad. Sci. U.S.A.">
        <title>Biogeography of the Sulfolobus islandicus pan-genome.</title>
        <authorList>
            <person name="Reno M.L."/>
            <person name="Held N.L."/>
            <person name="Fields C.J."/>
            <person name="Burke P.V."/>
            <person name="Whitaker R.J."/>
        </authorList>
    </citation>
    <scope>NUCLEOTIDE SEQUENCE [LARGE SCALE GENOMIC DNA]</scope>
    <source>
        <strain>L.S.2.15 / Lassen #1</strain>
    </source>
</reference>
<feature type="chain" id="PRO_1000205327" description="DNA repair and recombination protein RadA">
    <location>
        <begin position="1"/>
        <end position="324"/>
    </location>
</feature>
<feature type="binding site" evidence="1">
    <location>
        <begin position="114"/>
        <end position="121"/>
    </location>
    <ligand>
        <name>ATP</name>
        <dbReference type="ChEBI" id="CHEBI:30616"/>
    </ligand>
</feature>
<protein>
    <recommendedName>
        <fullName evidence="1">DNA repair and recombination protein RadA</fullName>
    </recommendedName>
</protein>
<comment type="function">
    <text evidence="1">Involved in DNA repair and in homologous recombination. Binds and assemble on single-stranded DNA to form a nucleoprotein filament. Hydrolyzes ATP in a ssDNA-dependent manner and promotes DNA strand exchange between homologous DNA molecules.</text>
</comment>
<comment type="similarity">
    <text evidence="1">Belongs to the eukaryotic RecA-like protein family.</text>
</comment>
<proteinExistence type="inferred from homology"/>
<accession>C3MRI1</accession>
<sequence length="324" mass="35840">MSNEVEQKKSIKTINDLPGISQTVINKLIEAGYSSLETLAVASPQDLSVAAGIPLSTAQKIIKEARDALDIRFKTALEVKKERMNVKKISTGSQALDGLLAGGIETRTMTEFFGEFGSGKTQLCHQLSVNVQLPPEKGGLSGKAVYIDTEGTFRWERIENMAKALGLDIDNVMNNIYYIRAINTDHQIAIVDDLQELVSKDPSIKLIVVDSVTSHFRAEYPGRENLAVRQQKLNKHLHQLTRLAEVYDIAVIITNQVMARPDMFYGDPTVAVGGHTLYHVPGIRIQLKKSRGNRRIARVVDAPHLPEGEVVFALTEEGIRDAEE</sequence>